<evidence type="ECO:0000255" key="1">
    <source>
        <dbReference type="HAMAP-Rule" id="MF_01849"/>
    </source>
</evidence>
<evidence type="ECO:0000255" key="2">
    <source>
        <dbReference type="PROSITE-ProRule" id="PRU01266"/>
    </source>
</evidence>
<reference key="1">
    <citation type="journal article" date="2002" name="DNA Res.">
        <title>Complete genome structure of the thermophilic cyanobacterium Thermosynechococcus elongatus BP-1.</title>
        <authorList>
            <person name="Nakamura Y."/>
            <person name="Kaneko T."/>
            <person name="Sato S."/>
            <person name="Ikeuchi M."/>
            <person name="Katoh H."/>
            <person name="Sasamoto S."/>
            <person name="Watanabe A."/>
            <person name="Iriguchi M."/>
            <person name="Kawashima K."/>
            <person name="Kimura T."/>
            <person name="Kishida Y."/>
            <person name="Kiyokawa C."/>
            <person name="Kohara M."/>
            <person name="Matsumoto M."/>
            <person name="Matsuno A."/>
            <person name="Nakazaki N."/>
            <person name="Shimpo S."/>
            <person name="Sugimoto M."/>
            <person name="Takeuchi C."/>
            <person name="Yamada M."/>
            <person name="Tabata S."/>
        </authorList>
    </citation>
    <scope>NUCLEOTIDE SEQUENCE [LARGE SCALE GENOMIC DNA]</scope>
    <source>
        <strain>NIES-2133 / IAM M-273 / BP-1</strain>
    </source>
</reference>
<sequence>MVLLGRSAAELKAWVEAQGQPGYRGQQLHQWLYRKGARSLQEITVFPKQWRAALADVEIGRSEIRYRHDAQDGTVKLLLALADGETIETVGIPSSDRLTVCVSSQVGCPMACDFCATGKGGYRRNLACHEILDQVLTIQSEMGRRVSHVVFMGMGEPLLNLPAVLQAITCLNRDIGIGQRHITISTVGIPQQIQRLAQHQLQTTLAVSLHAPNQALREQLIPSAKHYPLSQLIADCRAYVQQTGRRITFEYTVLAGVNDRPQHAEELAQLLRGFQSHVNLIPYNPIAEAAYQRPTDQHLRQFLSQLQALGVTASIRRSRGLDRQAACGQLRQAQLIA</sequence>
<comment type="function">
    <text evidence="1">Specifically methylates position 2 of adenine 2503 in 23S rRNA and position 2 of adenine 37 in tRNAs.</text>
</comment>
<comment type="catalytic activity">
    <reaction evidence="1">
        <text>adenosine(2503) in 23S rRNA + 2 reduced [2Fe-2S]-[ferredoxin] + 2 S-adenosyl-L-methionine = 2-methyladenosine(2503) in 23S rRNA + 5'-deoxyadenosine + L-methionine + 2 oxidized [2Fe-2S]-[ferredoxin] + S-adenosyl-L-homocysteine</text>
        <dbReference type="Rhea" id="RHEA:42916"/>
        <dbReference type="Rhea" id="RHEA-COMP:10000"/>
        <dbReference type="Rhea" id="RHEA-COMP:10001"/>
        <dbReference type="Rhea" id="RHEA-COMP:10152"/>
        <dbReference type="Rhea" id="RHEA-COMP:10282"/>
        <dbReference type="ChEBI" id="CHEBI:17319"/>
        <dbReference type="ChEBI" id="CHEBI:33737"/>
        <dbReference type="ChEBI" id="CHEBI:33738"/>
        <dbReference type="ChEBI" id="CHEBI:57844"/>
        <dbReference type="ChEBI" id="CHEBI:57856"/>
        <dbReference type="ChEBI" id="CHEBI:59789"/>
        <dbReference type="ChEBI" id="CHEBI:74411"/>
        <dbReference type="ChEBI" id="CHEBI:74497"/>
        <dbReference type="EC" id="2.1.1.192"/>
    </reaction>
</comment>
<comment type="catalytic activity">
    <reaction evidence="1">
        <text>adenosine(37) in tRNA + 2 reduced [2Fe-2S]-[ferredoxin] + 2 S-adenosyl-L-methionine = 2-methyladenosine(37) in tRNA + 5'-deoxyadenosine + L-methionine + 2 oxidized [2Fe-2S]-[ferredoxin] + S-adenosyl-L-homocysteine</text>
        <dbReference type="Rhea" id="RHEA:43332"/>
        <dbReference type="Rhea" id="RHEA-COMP:10000"/>
        <dbReference type="Rhea" id="RHEA-COMP:10001"/>
        <dbReference type="Rhea" id="RHEA-COMP:10162"/>
        <dbReference type="Rhea" id="RHEA-COMP:10485"/>
        <dbReference type="ChEBI" id="CHEBI:17319"/>
        <dbReference type="ChEBI" id="CHEBI:33737"/>
        <dbReference type="ChEBI" id="CHEBI:33738"/>
        <dbReference type="ChEBI" id="CHEBI:57844"/>
        <dbReference type="ChEBI" id="CHEBI:57856"/>
        <dbReference type="ChEBI" id="CHEBI:59789"/>
        <dbReference type="ChEBI" id="CHEBI:74411"/>
        <dbReference type="ChEBI" id="CHEBI:74497"/>
        <dbReference type="EC" id="2.1.1.192"/>
    </reaction>
</comment>
<comment type="cofactor">
    <cofactor evidence="1">
        <name>[4Fe-4S] cluster</name>
        <dbReference type="ChEBI" id="CHEBI:49883"/>
    </cofactor>
    <text evidence="1">Binds 1 [4Fe-4S] cluster. The cluster is coordinated with 3 cysteines and an exchangeable S-adenosyl-L-methionine.</text>
</comment>
<comment type="subcellular location">
    <subcellularLocation>
        <location evidence="1">Cytoplasm</location>
    </subcellularLocation>
</comment>
<comment type="miscellaneous">
    <text evidence="1">Reaction proceeds by a ping-pong mechanism involving intermediate methylation of a conserved cysteine residue.</text>
</comment>
<comment type="similarity">
    <text evidence="1">Belongs to the radical SAM superfamily. RlmN family.</text>
</comment>
<dbReference type="EC" id="2.1.1.192" evidence="1"/>
<dbReference type="EMBL" id="BA000039">
    <property type="protein sequence ID" value="BAC09977.1"/>
    <property type="molecule type" value="Genomic_DNA"/>
</dbReference>
<dbReference type="RefSeq" id="NP_683215.1">
    <property type="nucleotide sequence ID" value="NC_004113.1"/>
</dbReference>
<dbReference type="RefSeq" id="WP_011058257.1">
    <property type="nucleotide sequence ID" value="NC_004113.1"/>
</dbReference>
<dbReference type="SMR" id="Q8DG98"/>
<dbReference type="STRING" id="197221.gene:10749045"/>
<dbReference type="EnsemblBacteria" id="BAC09977">
    <property type="protein sequence ID" value="BAC09977"/>
    <property type="gene ID" value="BAC09977"/>
</dbReference>
<dbReference type="KEGG" id="tel:tll2425"/>
<dbReference type="PATRIC" id="fig|197221.4.peg.2548"/>
<dbReference type="eggNOG" id="COG0820">
    <property type="taxonomic scope" value="Bacteria"/>
</dbReference>
<dbReference type="Proteomes" id="UP000000440">
    <property type="component" value="Chromosome"/>
</dbReference>
<dbReference type="GO" id="GO:0005737">
    <property type="term" value="C:cytoplasm"/>
    <property type="evidence" value="ECO:0007669"/>
    <property type="project" value="UniProtKB-SubCell"/>
</dbReference>
<dbReference type="GO" id="GO:0051539">
    <property type="term" value="F:4 iron, 4 sulfur cluster binding"/>
    <property type="evidence" value="ECO:0007669"/>
    <property type="project" value="UniProtKB-UniRule"/>
</dbReference>
<dbReference type="GO" id="GO:0046872">
    <property type="term" value="F:metal ion binding"/>
    <property type="evidence" value="ECO:0007669"/>
    <property type="project" value="UniProtKB-KW"/>
</dbReference>
<dbReference type="GO" id="GO:0070040">
    <property type="term" value="F:rRNA (adenine(2503)-C2-)-methyltransferase activity"/>
    <property type="evidence" value="ECO:0007669"/>
    <property type="project" value="UniProtKB-UniRule"/>
</dbReference>
<dbReference type="GO" id="GO:0019843">
    <property type="term" value="F:rRNA binding"/>
    <property type="evidence" value="ECO:0007669"/>
    <property type="project" value="UniProtKB-UniRule"/>
</dbReference>
<dbReference type="GO" id="GO:0002935">
    <property type="term" value="F:tRNA (adenine(37)-C2)-methyltransferase activity"/>
    <property type="evidence" value="ECO:0007669"/>
    <property type="project" value="UniProtKB-UniRule"/>
</dbReference>
<dbReference type="GO" id="GO:0000049">
    <property type="term" value="F:tRNA binding"/>
    <property type="evidence" value="ECO:0007669"/>
    <property type="project" value="UniProtKB-UniRule"/>
</dbReference>
<dbReference type="GO" id="GO:0070475">
    <property type="term" value="P:rRNA base methylation"/>
    <property type="evidence" value="ECO:0007669"/>
    <property type="project" value="UniProtKB-UniRule"/>
</dbReference>
<dbReference type="GO" id="GO:0030488">
    <property type="term" value="P:tRNA methylation"/>
    <property type="evidence" value="ECO:0007669"/>
    <property type="project" value="UniProtKB-UniRule"/>
</dbReference>
<dbReference type="CDD" id="cd01335">
    <property type="entry name" value="Radical_SAM"/>
    <property type="match status" value="1"/>
</dbReference>
<dbReference type="FunFam" id="3.20.20.70:FF:000014">
    <property type="entry name" value="Probable dual-specificity RNA methyltransferase RlmN"/>
    <property type="match status" value="1"/>
</dbReference>
<dbReference type="Gene3D" id="1.10.150.530">
    <property type="match status" value="1"/>
</dbReference>
<dbReference type="Gene3D" id="3.20.20.70">
    <property type="entry name" value="Aldolase class I"/>
    <property type="match status" value="1"/>
</dbReference>
<dbReference type="HAMAP" id="MF_01849">
    <property type="entry name" value="RNA_methyltr_RlmN"/>
    <property type="match status" value="1"/>
</dbReference>
<dbReference type="InterPro" id="IPR013785">
    <property type="entry name" value="Aldolase_TIM"/>
</dbReference>
<dbReference type="InterPro" id="IPR040072">
    <property type="entry name" value="Methyltransferase_A"/>
</dbReference>
<dbReference type="InterPro" id="IPR048641">
    <property type="entry name" value="RlmN_N"/>
</dbReference>
<dbReference type="InterPro" id="IPR027492">
    <property type="entry name" value="RNA_MTrfase_RlmN"/>
</dbReference>
<dbReference type="InterPro" id="IPR004383">
    <property type="entry name" value="rRNA_lsu_MTrfase_RlmN/Cfr"/>
</dbReference>
<dbReference type="InterPro" id="IPR007197">
    <property type="entry name" value="rSAM"/>
</dbReference>
<dbReference type="NCBIfam" id="TIGR00048">
    <property type="entry name" value="rRNA_mod_RlmN"/>
    <property type="match status" value="1"/>
</dbReference>
<dbReference type="PANTHER" id="PTHR30544">
    <property type="entry name" value="23S RRNA METHYLTRANSFERASE"/>
    <property type="match status" value="1"/>
</dbReference>
<dbReference type="PANTHER" id="PTHR30544:SF5">
    <property type="entry name" value="RADICAL SAM CORE DOMAIN-CONTAINING PROTEIN"/>
    <property type="match status" value="1"/>
</dbReference>
<dbReference type="Pfam" id="PF04055">
    <property type="entry name" value="Radical_SAM"/>
    <property type="match status" value="1"/>
</dbReference>
<dbReference type="Pfam" id="PF21016">
    <property type="entry name" value="RlmN_N"/>
    <property type="match status" value="1"/>
</dbReference>
<dbReference type="PIRSF" id="PIRSF006004">
    <property type="entry name" value="CHP00048"/>
    <property type="match status" value="1"/>
</dbReference>
<dbReference type="SFLD" id="SFLDF00275">
    <property type="entry name" value="adenosine_C2_methyltransferase"/>
    <property type="match status" value="1"/>
</dbReference>
<dbReference type="SFLD" id="SFLDS00029">
    <property type="entry name" value="Radical_SAM"/>
    <property type="match status" value="1"/>
</dbReference>
<dbReference type="SUPFAM" id="SSF102114">
    <property type="entry name" value="Radical SAM enzymes"/>
    <property type="match status" value="1"/>
</dbReference>
<dbReference type="PROSITE" id="PS51918">
    <property type="entry name" value="RADICAL_SAM"/>
    <property type="match status" value="1"/>
</dbReference>
<keyword id="KW-0004">4Fe-4S</keyword>
<keyword id="KW-0963">Cytoplasm</keyword>
<keyword id="KW-1015">Disulfide bond</keyword>
<keyword id="KW-0408">Iron</keyword>
<keyword id="KW-0411">Iron-sulfur</keyword>
<keyword id="KW-0479">Metal-binding</keyword>
<keyword id="KW-0489">Methyltransferase</keyword>
<keyword id="KW-1185">Reference proteome</keyword>
<keyword id="KW-0698">rRNA processing</keyword>
<keyword id="KW-0949">S-adenosyl-L-methionine</keyword>
<keyword id="KW-0808">Transferase</keyword>
<keyword id="KW-0819">tRNA processing</keyword>
<protein>
    <recommendedName>
        <fullName evidence="1">Probable dual-specificity RNA methyltransferase RlmN</fullName>
        <ecNumber evidence="1">2.1.1.192</ecNumber>
    </recommendedName>
    <alternativeName>
        <fullName evidence="1">23S rRNA (adenine(2503)-C(2))-methyltransferase</fullName>
    </alternativeName>
    <alternativeName>
        <fullName evidence="1">23S rRNA m2A2503 methyltransferase</fullName>
    </alternativeName>
    <alternativeName>
        <fullName evidence="1">Ribosomal RNA large subunit methyltransferase N</fullName>
    </alternativeName>
    <alternativeName>
        <fullName evidence="1">tRNA (adenine(37)-C(2))-methyltransferase</fullName>
    </alternativeName>
    <alternativeName>
        <fullName evidence="1">tRNA m2A37 methyltransferase</fullName>
    </alternativeName>
</protein>
<name>RLMN_THEVB</name>
<gene>
    <name evidence="1" type="primary">rlmN</name>
    <name type="ordered locus">tll2425</name>
</gene>
<proteinExistence type="inferred from homology"/>
<feature type="chain" id="PRO_0000350480" description="Probable dual-specificity RNA methyltransferase RlmN">
    <location>
        <begin position="1"/>
        <end position="337"/>
    </location>
</feature>
<feature type="domain" description="Radical SAM core" evidence="2">
    <location>
        <begin position="94"/>
        <end position="322"/>
    </location>
</feature>
<feature type="active site" description="Proton acceptor" evidence="1">
    <location>
        <position position="88"/>
    </location>
</feature>
<feature type="active site" description="S-methylcysteine intermediate" evidence="1">
    <location>
        <position position="327"/>
    </location>
</feature>
<feature type="binding site" evidence="1">
    <location>
        <position position="108"/>
    </location>
    <ligand>
        <name>[4Fe-4S] cluster</name>
        <dbReference type="ChEBI" id="CHEBI:49883"/>
        <note>4Fe-4S-S-AdoMet</note>
    </ligand>
</feature>
<feature type="binding site" evidence="1">
    <location>
        <position position="112"/>
    </location>
    <ligand>
        <name>[4Fe-4S] cluster</name>
        <dbReference type="ChEBI" id="CHEBI:49883"/>
        <note>4Fe-4S-S-AdoMet</note>
    </ligand>
</feature>
<feature type="binding site" evidence="1">
    <location>
        <position position="115"/>
    </location>
    <ligand>
        <name>[4Fe-4S] cluster</name>
        <dbReference type="ChEBI" id="CHEBI:49883"/>
        <note>4Fe-4S-S-AdoMet</note>
    </ligand>
</feature>
<feature type="binding site" evidence="1">
    <location>
        <begin position="155"/>
        <end position="156"/>
    </location>
    <ligand>
        <name>S-adenosyl-L-methionine</name>
        <dbReference type="ChEBI" id="CHEBI:59789"/>
    </ligand>
</feature>
<feature type="binding site" evidence="1">
    <location>
        <position position="185"/>
    </location>
    <ligand>
        <name>S-adenosyl-L-methionine</name>
        <dbReference type="ChEBI" id="CHEBI:59789"/>
    </ligand>
</feature>
<feature type="binding site" evidence="1">
    <location>
        <begin position="208"/>
        <end position="210"/>
    </location>
    <ligand>
        <name>S-adenosyl-L-methionine</name>
        <dbReference type="ChEBI" id="CHEBI:59789"/>
    </ligand>
</feature>
<feature type="binding site" evidence="1">
    <location>
        <position position="284"/>
    </location>
    <ligand>
        <name>S-adenosyl-L-methionine</name>
        <dbReference type="ChEBI" id="CHEBI:59789"/>
    </ligand>
</feature>
<feature type="disulfide bond" description="(transient)" evidence="1">
    <location>
        <begin position="101"/>
        <end position="327"/>
    </location>
</feature>
<accession>Q8DG98</accession>
<organism>
    <name type="scientific">Thermosynechococcus vestitus (strain NIES-2133 / IAM M-273 / BP-1)</name>
    <dbReference type="NCBI Taxonomy" id="197221"/>
    <lineage>
        <taxon>Bacteria</taxon>
        <taxon>Bacillati</taxon>
        <taxon>Cyanobacteriota</taxon>
        <taxon>Cyanophyceae</taxon>
        <taxon>Acaryochloridales</taxon>
        <taxon>Thermosynechococcaceae</taxon>
        <taxon>Thermosynechococcus</taxon>
    </lineage>
</organism>